<keyword id="KW-0025">Alternative splicing</keyword>
<keyword id="KW-0131">Cell cycle</keyword>
<keyword id="KW-0132">Cell division</keyword>
<keyword id="KW-0158">Chromosome</keyword>
<keyword id="KW-0159">Chromosome partition</keyword>
<keyword id="KW-0469">Meiosis</keyword>
<keyword id="KW-0498">Mitosis</keyword>
<keyword id="KW-0539">Nucleus</keyword>
<keyword id="KW-1185">Reference proteome</keyword>
<reference key="1">
    <citation type="journal article" date="2000" name="Nature">
        <title>Sequence and analysis of chromosome 1 of the plant Arabidopsis thaliana.</title>
        <authorList>
            <person name="Theologis A."/>
            <person name="Ecker J.R."/>
            <person name="Palm C.J."/>
            <person name="Federspiel N.A."/>
            <person name="Kaul S."/>
            <person name="White O."/>
            <person name="Alonso J."/>
            <person name="Altafi H."/>
            <person name="Araujo R."/>
            <person name="Bowman C.L."/>
            <person name="Brooks S.Y."/>
            <person name="Buehler E."/>
            <person name="Chan A."/>
            <person name="Chao Q."/>
            <person name="Chen H."/>
            <person name="Cheuk R.F."/>
            <person name="Chin C.W."/>
            <person name="Chung M.K."/>
            <person name="Conn L."/>
            <person name="Conway A.B."/>
            <person name="Conway A.R."/>
            <person name="Creasy T.H."/>
            <person name="Dewar K."/>
            <person name="Dunn P."/>
            <person name="Etgu P."/>
            <person name="Feldblyum T.V."/>
            <person name="Feng J.-D."/>
            <person name="Fong B."/>
            <person name="Fujii C.Y."/>
            <person name="Gill J.E."/>
            <person name="Goldsmith A.D."/>
            <person name="Haas B."/>
            <person name="Hansen N.F."/>
            <person name="Hughes B."/>
            <person name="Huizar L."/>
            <person name="Hunter J.L."/>
            <person name="Jenkins J."/>
            <person name="Johnson-Hopson C."/>
            <person name="Khan S."/>
            <person name="Khaykin E."/>
            <person name="Kim C.J."/>
            <person name="Koo H.L."/>
            <person name="Kremenetskaia I."/>
            <person name="Kurtz D.B."/>
            <person name="Kwan A."/>
            <person name="Lam B."/>
            <person name="Langin-Hooper S."/>
            <person name="Lee A."/>
            <person name="Lee J.M."/>
            <person name="Lenz C.A."/>
            <person name="Li J.H."/>
            <person name="Li Y.-P."/>
            <person name="Lin X."/>
            <person name="Liu S.X."/>
            <person name="Liu Z.A."/>
            <person name="Luros J.S."/>
            <person name="Maiti R."/>
            <person name="Marziali A."/>
            <person name="Militscher J."/>
            <person name="Miranda M."/>
            <person name="Nguyen M."/>
            <person name="Nierman W.C."/>
            <person name="Osborne B.I."/>
            <person name="Pai G."/>
            <person name="Peterson J."/>
            <person name="Pham P.K."/>
            <person name="Rizzo M."/>
            <person name="Rooney T."/>
            <person name="Rowley D."/>
            <person name="Sakano H."/>
            <person name="Salzberg S.L."/>
            <person name="Schwartz J.R."/>
            <person name="Shinn P."/>
            <person name="Southwick A.M."/>
            <person name="Sun H."/>
            <person name="Tallon L.J."/>
            <person name="Tambunga G."/>
            <person name="Toriumi M.J."/>
            <person name="Town C.D."/>
            <person name="Utterback T."/>
            <person name="Van Aken S."/>
            <person name="Vaysberg M."/>
            <person name="Vysotskaia V.S."/>
            <person name="Walker M."/>
            <person name="Wu D."/>
            <person name="Yu G."/>
            <person name="Fraser C.M."/>
            <person name="Venter J.C."/>
            <person name="Davis R.W."/>
        </authorList>
    </citation>
    <scope>NUCLEOTIDE SEQUENCE [LARGE SCALE GENOMIC DNA]</scope>
    <source>
        <strain>cv. Columbia</strain>
    </source>
</reference>
<reference key="2">
    <citation type="journal article" date="2017" name="Plant J.">
        <title>Araport11: a complete reannotation of the Arabidopsis thaliana reference genome.</title>
        <authorList>
            <person name="Cheng C.Y."/>
            <person name="Krishnakumar V."/>
            <person name="Chan A.P."/>
            <person name="Thibaud-Nissen F."/>
            <person name="Schobel S."/>
            <person name="Town C.D."/>
        </authorList>
    </citation>
    <scope>GENOME REANNOTATION</scope>
    <source>
        <strain>cv. Columbia</strain>
    </source>
</reference>
<reference key="3">
    <citation type="submission" date="2004-09" db="EMBL/GenBank/DDBJ databases">
        <title>Large-scale analysis of RIKEN Arabidopsis full-length (RAFL) cDNAs.</title>
        <authorList>
            <person name="Totoki Y."/>
            <person name="Seki M."/>
            <person name="Ishida J."/>
            <person name="Nakajima M."/>
            <person name="Enju A."/>
            <person name="Kamiya A."/>
            <person name="Narusaka M."/>
            <person name="Shin-i T."/>
            <person name="Nakagawa M."/>
            <person name="Sakamoto N."/>
            <person name="Oishi K."/>
            <person name="Kohara Y."/>
            <person name="Kobayashi M."/>
            <person name="Toyoda A."/>
            <person name="Sakaki Y."/>
            <person name="Sakurai T."/>
            <person name="Iida K."/>
            <person name="Akiyama K."/>
            <person name="Satou M."/>
            <person name="Toyoda T."/>
            <person name="Konagaya A."/>
            <person name="Carninci P."/>
            <person name="Kawai J."/>
            <person name="Hayashizaki Y."/>
            <person name="Shinozaki K."/>
        </authorList>
    </citation>
    <scope>NUCLEOTIDE SEQUENCE [LARGE SCALE MRNA] OF 1-322</scope>
    <source>
        <strain>cv. Columbia</strain>
    </source>
</reference>
<reference key="4">
    <citation type="journal article" date="2014" name="PLoS Genet.">
        <title>Arabidopsis thaliana WAPL is essential for the prophase removal of cohesin during meiosis.</title>
        <authorList>
            <person name="De K."/>
            <person name="Sterle L."/>
            <person name="Krueger L."/>
            <person name="Yang X."/>
            <person name="Makaroff C.A."/>
        </authorList>
    </citation>
    <scope>FUNCTION</scope>
    <scope>DISRUPTION PHENOTYPE</scope>
    <scope>TISSUE SPECIFICITY</scope>
    <source>
        <strain>cv. Columbia</strain>
    </source>
</reference>
<reference key="5">
    <citation type="journal article" date="2016" name="Plant Cell">
        <title>The Opposing Actions of Arabidopsis CHROMOSOME TRANSMISSION FIDELITY7 and WINGS APART-LIKE1 and 2 Differ in Mitotic and Meiotic Cells.</title>
        <authorList>
            <person name="De K."/>
            <person name="Bolanos-Villegas P."/>
            <person name="Mitra S."/>
            <person name="Yang X."/>
            <person name="Homan G."/>
            <person name="Jauh G.-Y."/>
            <person name="Makaroff C.A."/>
        </authorList>
    </citation>
    <scope>FUNCTION</scope>
    <scope>DISRUPTION PHENOTYPE</scope>
    <source>
        <strain>cv. Columbia</strain>
    </source>
</reference>
<protein>
    <recommendedName>
        <fullName evidence="6">Wings apart-like protein 2</fullName>
        <shortName evidence="6">AtWAPL2</shortName>
    </recommendedName>
</protein>
<feature type="chain" id="PRO_0000450126" description="Wings apart-like protein 2">
    <location>
        <begin position="1"/>
        <end position="840"/>
    </location>
</feature>
<feature type="domain" description="WAPL" evidence="2">
    <location>
        <begin position="764"/>
        <end position="819"/>
    </location>
</feature>
<feature type="region of interest" description="Disordered" evidence="3">
    <location>
        <begin position="1"/>
        <end position="37"/>
    </location>
</feature>
<feature type="region of interest" description="Disordered" evidence="3">
    <location>
        <begin position="56"/>
        <end position="78"/>
    </location>
</feature>
<feature type="region of interest" description="Disordered" evidence="3">
    <location>
        <begin position="532"/>
        <end position="594"/>
    </location>
</feature>
<feature type="compositionally biased region" description="Basic residues" evidence="3">
    <location>
        <begin position="546"/>
        <end position="557"/>
    </location>
</feature>
<feature type="compositionally biased region" description="Basic and acidic residues" evidence="3">
    <location>
        <begin position="558"/>
        <end position="567"/>
    </location>
</feature>
<feature type="compositionally biased region" description="Polar residues" evidence="3">
    <location>
        <begin position="569"/>
        <end position="585"/>
    </location>
</feature>
<feature type="splice variant" id="VSP_060585" description="In isoform 2.">
    <original>S</original>
    <variation>V</variation>
    <location>
        <position position="322"/>
    </location>
</feature>
<feature type="splice variant" id="VSP_060586" description="In isoform 2.">
    <location>
        <begin position="323"/>
        <end position="840"/>
    </location>
</feature>
<gene>
    <name evidence="6" type="primary">WAPL2</name>
    <name evidence="8" type="ordered locus">At1g61030</name>
    <name evidence="9" type="ORF">T7P1.16</name>
</gene>
<proteinExistence type="evidence at transcript level"/>
<dbReference type="EMBL" id="AC018908">
    <property type="protein sequence ID" value="AAG51640.1"/>
    <property type="molecule type" value="Genomic_DNA"/>
</dbReference>
<dbReference type="EMBL" id="CP002684">
    <property type="protein sequence ID" value="AEE33769.1"/>
    <property type="molecule type" value="Genomic_DNA"/>
</dbReference>
<dbReference type="EMBL" id="AK175556">
    <property type="protein sequence ID" value="BAD43319.1"/>
    <property type="molecule type" value="mRNA"/>
</dbReference>
<dbReference type="PIR" id="H96635">
    <property type="entry name" value="H96635"/>
</dbReference>
<dbReference type="RefSeq" id="NP_176298.1">
    <molecule id="Q9C951-1"/>
    <property type="nucleotide sequence ID" value="NM_104783.3"/>
</dbReference>
<dbReference type="SMR" id="Q9C951"/>
<dbReference type="FunCoup" id="Q9C951">
    <property type="interactions" value="1615"/>
</dbReference>
<dbReference type="STRING" id="3702.Q9C951"/>
<dbReference type="iPTMnet" id="Q9C951"/>
<dbReference type="PaxDb" id="3702-AT1G61030.1"/>
<dbReference type="ProteomicsDB" id="177244">
    <molecule id="Q9C951-1"/>
</dbReference>
<dbReference type="EnsemblPlants" id="AT1G61030.1">
    <molecule id="Q9C951-1"/>
    <property type="protein sequence ID" value="AT1G61030.1"/>
    <property type="gene ID" value="AT1G61030"/>
</dbReference>
<dbReference type="GeneID" id="842394"/>
<dbReference type="Gramene" id="AT1G61030.1">
    <molecule id="Q9C951-1"/>
    <property type="protein sequence ID" value="AT1G61030.1"/>
    <property type="gene ID" value="AT1G61030"/>
</dbReference>
<dbReference type="KEGG" id="ath:AT1G61030"/>
<dbReference type="Araport" id="AT1G61030"/>
<dbReference type="TAIR" id="AT1G61030">
    <property type="gene designation" value="WAPL2"/>
</dbReference>
<dbReference type="eggNOG" id="KOG2152">
    <property type="taxonomic scope" value="Eukaryota"/>
</dbReference>
<dbReference type="HOGENOM" id="CLU_015006_0_0_1"/>
<dbReference type="InParanoid" id="Q9C951"/>
<dbReference type="OMA" id="SEQDMIP"/>
<dbReference type="PhylomeDB" id="Q9C951"/>
<dbReference type="PRO" id="PR:Q9C951"/>
<dbReference type="Proteomes" id="UP000006548">
    <property type="component" value="Chromosome 1"/>
</dbReference>
<dbReference type="ExpressionAtlas" id="Q9C951">
    <property type="expression patterns" value="baseline and differential"/>
</dbReference>
<dbReference type="GO" id="GO:0005694">
    <property type="term" value="C:chromosome"/>
    <property type="evidence" value="ECO:0007669"/>
    <property type="project" value="UniProtKB-SubCell"/>
</dbReference>
<dbReference type="GO" id="GO:0005634">
    <property type="term" value="C:nucleus"/>
    <property type="evidence" value="ECO:0007669"/>
    <property type="project" value="UniProtKB-SubCell"/>
</dbReference>
<dbReference type="GO" id="GO:0051301">
    <property type="term" value="P:cell division"/>
    <property type="evidence" value="ECO:0007669"/>
    <property type="project" value="UniProtKB-KW"/>
</dbReference>
<dbReference type="GO" id="GO:0006281">
    <property type="term" value="P:DNA repair"/>
    <property type="evidence" value="ECO:0000315"/>
    <property type="project" value="UniProtKB"/>
</dbReference>
<dbReference type="GO" id="GO:0009793">
    <property type="term" value="P:embryo development ending in seed dormancy"/>
    <property type="evidence" value="ECO:0000316"/>
    <property type="project" value="TAIR"/>
</dbReference>
<dbReference type="GO" id="GO:0045132">
    <property type="term" value="P:meiotic chromosome segregation"/>
    <property type="evidence" value="ECO:0000316"/>
    <property type="project" value="TAIR"/>
</dbReference>
<dbReference type="GO" id="GO:0051177">
    <property type="term" value="P:meiotic sister chromatid cohesion"/>
    <property type="evidence" value="ECO:0000315"/>
    <property type="project" value="UniProtKB"/>
</dbReference>
<dbReference type="GO" id="GO:0010789">
    <property type="term" value="P:meiotic sister chromatid cohesion involved in meiosis I"/>
    <property type="evidence" value="ECO:0000316"/>
    <property type="project" value="TAIR"/>
</dbReference>
<dbReference type="GO" id="GO:0007064">
    <property type="term" value="P:mitotic sister chromatid cohesion"/>
    <property type="evidence" value="ECO:0000315"/>
    <property type="project" value="UniProtKB"/>
</dbReference>
<dbReference type="GO" id="GO:0000070">
    <property type="term" value="P:mitotic sister chromatid segregation"/>
    <property type="evidence" value="ECO:0000316"/>
    <property type="project" value="TAIR"/>
</dbReference>
<dbReference type="FunFam" id="1.25.10.10:FF:000519">
    <property type="entry name" value="WAPL (Wings apart-like protein regulation of heterochromatin) protein"/>
    <property type="match status" value="1"/>
</dbReference>
<dbReference type="FunFam" id="1.25.10.10:FF:000417">
    <property type="entry name" value="Wings apart-like protein-like isoform A"/>
    <property type="match status" value="1"/>
</dbReference>
<dbReference type="Gene3D" id="1.25.10.10">
    <property type="entry name" value="Leucine-rich Repeat Variant"/>
    <property type="match status" value="2"/>
</dbReference>
<dbReference type="InterPro" id="IPR011989">
    <property type="entry name" value="ARM-like"/>
</dbReference>
<dbReference type="InterPro" id="IPR016024">
    <property type="entry name" value="ARM-type_fold"/>
</dbReference>
<dbReference type="InterPro" id="IPR039874">
    <property type="entry name" value="WAPL"/>
</dbReference>
<dbReference type="InterPro" id="IPR022771">
    <property type="entry name" value="WAPL_C"/>
</dbReference>
<dbReference type="PANTHER" id="PTHR22100">
    <property type="entry name" value="WINGS APART-LIKE PROTEIN HOMOLOG"/>
    <property type="match status" value="1"/>
</dbReference>
<dbReference type="PANTHER" id="PTHR22100:SF13">
    <property type="entry name" value="WINGS APART-LIKE PROTEIN HOMOLOG"/>
    <property type="match status" value="1"/>
</dbReference>
<dbReference type="Pfam" id="PF07814">
    <property type="entry name" value="WAPL"/>
    <property type="match status" value="1"/>
</dbReference>
<dbReference type="SUPFAM" id="SSF48371">
    <property type="entry name" value="ARM repeat"/>
    <property type="match status" value="1"/>
</dbReference>
<organism>
    <name type="scientific">Arabidopsis thaliana</name>
    <name type="common">Mouse-ear cress</name>
    <dbReference type="NCBI Taxonomy" id="3702"/>
    <lineage>
        <taxon>Eukaryota</taxon>
        <taxon>Viridiplantae</taxon>
        <taxon>Streptophyta</taxon>
        <taxon>Embryophyta</taxon>
        <taxon>Tracheophyta</taxon>
        <taxon>Spermatophyta</taxon>
        <taxon>Magnoliopsida</taxon>
        <taxon>eudicotyledons</taxon>
        <taxon>Gunneridae</taxon>
        <taxon>Pentapetalae</taxon>
        <taxon>rosids</taxon>
        <taxon>malvids</taxon>
        <taxon>Brassicales</taxon>
        <taxon>Brassicaceae</taxon>
        <taxon>Camelineae</taxon>
        <taxon>Arabidopsis</taxon>
    </lineage>
</organism>
<comment type="function">
    <text evidence="1 4 5">Regulator of sister chromatid cohesion in meiosis which negatively regulates cohesin association with chromatin, acting as an antagonist of CTF7 (PubMed:25033056, PubMed:26813623). Cohesion ensures that chromosome partitioning is accurate in both meiotic and mitotic cells and plays an important role in DNA repair (By similarity). Essential for the prophase removal of cohesin during meiosis thus determining the timely release of meiotic cohesion (PubMed:25033056). Important for proper spindle attachment and assembly during meiosis (PubMed:25033056). Helps to prevent abnormal centromere association during prophase I in meiocytes (PubMed:25033056). Required for early embryonic patterning (PubMed:25033056). Also involved in chromosome segregation during mitosis (PubMed:25033056).</text>
</comment>
<comment type="subunit">
    <text evidence="1">Interacts with the cohesin complex throughout the cell cycle.</text>
</comment>
<comment type="subcellular location">
    <subcellularLocation>
        <location evidence="1">Nucleus</location>
    </subcellularLocation>
    <subcellularLocation>
        <location evidence="1">Chromosome</location>
    </subcellularLocation>
</comment>
<comment type="alternative products">
    <event type="alternative splicing"/>
    <isoform>
        <id>Q9C951-1</id>
        <name>1</name>
        <sequence type="displayed"/>
    </isoform>
    <isoform>
        <id>Q9C951-2</id>
        <name>2</name>
        <sequence type="described" ref="VSP_060585 VSP_060586"/>
    </isoform>
</comment>
<comment type="tissue specificity">
    <text evidence="4">Expressed in roots, leaves, buds and siliques.</text>
</comment>
<comment type="disruption phenotype">
    <text evidence="4 5">Plants missing both WAPL1 and WAPL2 have relatively normal growth (slightly slower) and development but exhibit a significant reduction in male and female fertility (aborted pollen and ovules prior to fertilization and embryo defects in fertilized seed), due to blocked removal of cohesin from chromosomes during meiotic prophase (late zygotene/pachytene stage) resulting in chromosome bridges, broken chromosomes and uneven chromosome segregation, and leading to shorter siliques containing fewer seeds; this double mutant restores pollen viablitity to pollen-lethal ctf7 mutation (PubMed:25033056, PubMed:26813623). During mitosis, abnormal chromosome segregation but normal cohesin release (PubMed:25033056).</text>
</comment>
<comment type="similarity">
    <text evidence="7">Belongs to the WAPL family.</text>
</comment>
<name>WAPL2_ARATH</name>
<evidence type="ECO:0000250" key="1">
    <source>
        <dbReference type="UniProtKB" id="Q7Z5K2"/>
    </source>
</evidence>
<evidence type="ECO:0000255" key="2">
    <source>
        <dbReference type="PROSITE-ProRule" id="PRU00603"/>
    </source>
</evidence>
<evidence type="ECO:0000256" key="3">
    <source>
        <dbReference type="SAM" id="MobiDB-lite"/>
    </source>
</evidence>
<evidence type="ECO:0000269" key="4">
    <source>
    </source>
</evidence>
<evidence type="ECO:0000269" key="5">
    <source>
    </source>
</evidence>
<evidence type="ECO:0000303" key="6">
    <source>
    </source>
</evidence>
<evidence type="ECO:0000305" key="7"/>
<evidence type="ECO:0000312" key="8">
    <source>
        <dbReference type="Araport" id="AT1G61030"/>
    </source>
</evidence>
<evidence type="ECO:0000312" key="9">
    <source>
        <dbReference type="EMBL" id="AAG51640.1"/>
    </source>
</evidence>
<sequence>MMERTYGRRKPGMLNDDVSRAEHIFPSSSSPELEPVDFSTQESSCVWNYSSRSTFSDNDFSEKRNKRPRNGGGGFGSNSTLMEAQEFGELIENEDEVNFALDGLKKGHKVRIRRAALSSLLSICESQYQRRSLRALGISQSIIDAILGLCLDDIPSNLAAATLFFVLTTDGQDDHFMESPNSIKFLVKLLRPVVSASTKVKPRNIGSRLLSIIKDVDAARDAASMHDLSSCDIIDRAQEILVNCKELRLIDSYKIERMRPELSTKWVALLVMEKACLSKISFDDTSGTVKKSGGMFKEKLRELGGLDAVFDVVMDCHTVMESWVTHDTLSVEDIKDDLNKQSLMLLLKCLKIMENATFLSTENQIHLLRLNKSMGSHESRLSFTELMISVIKILSGLQLRAHRNEKHPHPQPHLASAVKKGFVTIISSDTCSTTGFSSIKSLSVSKRNQSAFLVGCSTTPKPGSQSSVMSTIDHCTLTTTAGSNTGSFAGRLASLGSGISRSKTRTSQTRESSCKKVENFASFEDSQDPFSFDLEDSGPSRWAVGKQKKSKGQKRKGSYRDKKDERSLQLFSSQEESNHGLNSQEESSDRDHHVTEQPSLTYDIDKGCLCLLSDCLLTAVKVLMNLTNGNSVGCREVAACGGLESMAELVVGHFPSFTRSPLYSQMESGTCHQKDKHLTDQELDFLVAILGLLVNLVEKNGINRSRLAAASVPITNPEGLQDSEQDMIPLLCSIFLTNKGSADTKDETSTFTLDDEEAVLESEKEAEKMIVEAYSALLLAFLSTESRSIRNAIRDYLPKRDMAILVPVLDRFVAFHTTLDMIPPETHKVVMEVIESCKLP</sequence>
<accession>Q9C951</accession>
<accession>Q681R1</accession>